<sequence>MIQQQSRLSVADNTGARELLCIRVLGSTVGSKGLTKGGGNRRYAFVGDIVVAVVKDAAPNMGVKKSEVVRAVVVRTRQAIRRDNGMVIRFDDNAAVIIDKNGNPRGTRVFGPVARELREKNFTKIISLAPEVL</sequence>
<organism>
    <name type="scientific">Gloeobacter violaceus (strain ATCC 29082 / PCC 7421)</name>
    <dbReference type="NCBI Taxonomy" id="251221"/>
    <lineage>
        <taxon>Bacteria</taxon>
        <taxon>Bacillati</taxon>
        <taxon>Cyanobacteriota</taxon>
        <taxon>Cyanophyceae</taxon>
        <taxon>Gloeobacterales</taxon>
        <taxon>Gloeobacteraceae</taxon>
        <taxon>Gloeobacter</taxon>
    </lineage>
</organism>
<accession>Q7NEG2</accession>
<protein>
    <recommendedName>
        <fullName evidence="1">Large ribosomal subunit protein uL14</fullName>
    </recommendedName>
    <alternativeName>
        <fullName evidence="2">50S ribosomal protein L14</fullName>
    </alternativeName>
</protein>
<gene>
    <name evidence="1" type="primary">rplN</name>
    <name evidence="1" type="synonym">rpl14</name>
    <name type="ordered locus">gll3917</name>
</gene>
<comment type="function">
    <text evidence="1">Binds to 23S rRNA. Forms part of two intersubunit bridges in the 70S ribosome.</text>
</comment>
<comment type="subunit">
    <text evidence="1">Part of the 50S ribosomal subunit. Forms a cluster with proteins L3 and L19. In the 70S ribosome, L14 and L19 interact and together make contacts with the 16S rRNA in bridges B5 and B8.</text>
</comment>
<comment type="similarity">
    <text evidence="1">Belongs to the universal ribosomal protein uL14 family.</text>
</comment>
<proteinExistence type="inferred from homology"/>
<keyword id="KW-1185">Reference proteome</keyword>
<keyword id="KW-0687">Ribonucleoprotein</keyword>
<keyword id="KW-0689">Ribosomal protein</keyword>
<keyword id="KW-0694">RNA-binding</keyword>
<keyword id="KW-0699">rRNA-binding</keyword>
<reference key="1">
    <citation type="journal article" date="2003" name="DNA Res.">
        <title>Complete genome structure of Gloeobacter violaceus PCC 7421, a cyanobacterium that lacks thylakoids.</title>
        <authorList>
            <person name="Nakamura Y."/>
            <person name="Kaneko T."/>
            <person name="Sato S."/>
            <person name="Mimuro M."/>
            <person name="Miyashita H."/>
            <person name="Tsuchiya T."/>
            <person name="Sasamoto S."/>
            <person name="Watanabe A."/>
            <person name="Kawashima K."/>
            <person name="Kishida Y."/>
            <person name="Kiyokawa C."/>
            <person name="Kohara M."/>
            <person name="Matsumoto M."/>
            <person name="Matsuno A."/>
            <person name="Nakazaki N."/>
            <person name="Shimpo S."/>
            <person name="Takeuchi C."/>
            <person name="Yamada M."/>
            <person name="Tabata S."/>
        </authorList>
    </citation>
    <scope>NUCLEOTIDE SEQUENCE [LARGE SCALE GENOMIC DNA]</scope>
    <source>
        <strain>ATCC 29082 / PCC 7421</strain>
    </source>
</reference>
<feature type="chain" id="PRO_1000055587" description="Large ribosomal subunit protein uL14">
    <location>
        <begin position="1"/>
        <end position="133"/>
    </location>
</feature>
<evidence type="ECO:0000255" key="1">
    <source>
        <dbReference type="HAMAP-Rule" id="MF_01367"/>
    </source>
</evidence>
<evidence type="ECO:0000305" key="2"/>
<name>RL14_GLOVI</name>
<dbReference type="EMBL" id="BA000045">
    <property type="protein sequence ID" value="BAC91858.1"/>
    <property type="molecule type" value="Genomic_DNA"/>
</dbReference>
<dbReference type="RefSeq" id="NP_926863.1">
    <property type="nucleotide sequence ID" value="NC_005125.1"/>
</dbReference>
<dbReference type="RefSeq" id="WP_011143905.1">
    <property type="nucleotide sequence ID" value="NC_005125.1"/>
</dbReference>
<dbReference type="SMR" id="Q7NEG2"/>
<dbReference type="FunCoup" id="Q7NEG2">
    <property type="interactions" value="304"/>
</dbReference>
<dbReference type="STRING" id="251221.gene:10761434"/>
<dbReference type="EnsemblBacteria" id="BAC91858">
    <property type="protein sequence ID" value="BAC91858"/>
    <property type="gene ID" value="BAC91858"/>
</dbReference>
<dbReference type="KEGG" id="gvi:gll3917"/>
<dbReference type="PATRIC" id="fig|251221.4.peg.3950"/>
<dbReference type="eggNOG" id="COG0093">
    <property type="taxonomic scope" value="Bacteria"/>
</dbReference>
<dbReference type="HOGENOM" id="CLU_095071_2_1_3"/>
<dbReference type="InParanoid" id="Q7NEG2"/>
<dbReference type="OrthoDB" id="9806379at2"/>
<dbReference type="PhylomeDB" id="Q7NEG2"/>
<dbReference type="Proteomes" id="UP000000557">
    <property type="component" value="Chromosome"/>
</dbReference>
<dbReference type="GO" id="GO:0022625">
    <property type="term" value="C:cytosolic large ribosomal subunit"/>
    <property type="evidence" value="ECO:0000318"/>
    <property type="project" value="GO_Central"/>
</dbReference>
<dbReference type="GO" id="GO:0070180">
    <property type="term" value="F:large ribosomal subunit rRNA binding"/>
    <property type="evidence" value="ECO:0000318"/>
    <property type="project" value="GO_Central"/>
</dbReference>
<dbReference type="GO" id="GO:0003735">
    <property type="term" value="F:structural constituent of ribosome"/>
    <property type="evidence" value="ECO:0000318"/>
    <property type="project" value="GO_Central"/>
</dbReference>
<dbReference type="GO" id="GO:0006412">
    <property type="term" value="P:translation"/>
    <property type="evidence" value="ECO:0007669"/>
    <property type="project" value="UniProtKB-UniRule"/>
</dbReference>
<dbReference type="CDD" id="cd00337">
    <property type="entry name" value="Ribosomal_uL14"/>
    <property type="match status" value="1"/>
</dbReference>
<dbReference type="FunFam" id="2.40.150.20:FF:000001">
    <property type="entry name" value="50S ribosomal protein L14"/>
    <property type="match status" value="1"/>
</dbReference>
<dbReference type="Gene3D" id="2.40.150.20">
    <property type="entry name" value="Ribosomal protein L14"/>
    <property type="match status" value="1"/>
</dbReference>
<dbReference type="HAMAP" id="MF_01367">
    <property type="entry name" value="Ribosomal_uL14"/>
    <property type="match status" value="1"/>
</dbReference>
<dbReference type="InterPro" id="IPR000218">
    <property type="entry name" value="Ribosomal_uL14"/>
</dbReference>
<dbReference type="InterPro" id="IPR005745">
    <property type="entry name" value="Ribosomal_uL14_bac-type"/>
</dbReference>
<dbReference type="InterPro" id="IPR019972">
    <property type="entry name" value="Ribosomal_uL14_CS"/>
</dbReference>
<dbReference type="InterPro" id="IPR036853">
    <property type="entry name" value="Ribosomal_uL14_sf"/>
</dbReference>
<dbReference type="NCBIfam" id="TIGR01067">
    <property type="entry name" value="rplN_bact"/>
    <property type="match status" value="1"/>
</dbReference>
<dbReference type="PANTHER" id="PTHR11761">
    <property type="entry name" value="50S/60S RIBOSOMAL PROTEIN L14/L23"/>
    <property type="match status" value="1"/>
</dbReference>
<dbReference type="PANTHER" id="PTHR11761:SF3">
    <property type="entry name" value="LARGE RIBOSOMAL SUBUNIT PROTEIN UL14M"/>
    <property type="match status" value="1"/>
</dbReference>
<dbReference type="Pfam" id="PF00238">
    <property type="entry name" value="Ribosomal_L14"/>
    <property type="match status" value="1"/>
</dbReference>
<dbReference type="SMART" id="SM01374">
    <property type="entry name" value="Ribosomal_L14"/>
    <property type="match status" value="1"/>
</dbReference>
<dbReference type="SUPFAM" id="SSF50193">
    <property type="entry name" value="Ribosomal protein L14"/>
    <property type="match status" value="1"/>
</dbReference>
<dbReference type="PROSITE" id="PS00049">
    <property type="entry name" value="RIBOSOMAL_L14"/>
    <property type="match status" value="1"/>
</dbReference>